<gene>
    <name evidence="1" type="primary">ibpB</name>
    <name type="ordered locus">Spro_0049</name>
</gene>
<proteinExistence type="inferred from homology"/>
<keyword id="KW-0143">Chaperone</keyword>
<keyword id="KW-0963">Cytoplasm</keyword>
<keyword id="KW-0346">Stress response</keyword>
<evidence type="ECO:0000255" key="1">
    <source>
        <dbReference type="HAMAP-Rule" id="MF_02001"/>
    </source>
</evidence>
<evidence type="ECO:0000255" key="2">
    <source>
        <dbReference type="PROSITE-ProRule" id="PRU00285"/>
    </source>
</evidence>
<dbReference type="EMBL" id="CP000826">
    <property type="protein sequence ID" value="ABV39159.1"/>
    <property type="molecule type" value="Genomic_DNA"/>
</dbReference>
<dbReference type="SMR" id="A8G7R9"/>
<dbReference type="STRING" id="399741.Spro_0049"/>
<dbReference type="KEGG" id="spe:Spro_0049"/>
<dbReference type="eggNOG" id="COG0071">
    <property type="taxonomic scope" value="Bacteria"/>
</dbReference>
<dbReference type="HOGENOM" id="CLU_046737_4_2_6"/>
<dbReference type="OrthoDB" id="6871152at2"/>
<dbReference type="GO" id="GO:0005737">
    <property type="term" value="C:cytoplasm"/>
    <property type="evidence" value="ECO:0007669"/>
    <property type="project" value="UniProtKB-SubCell"/>
</dbReference>
<dbReference type="GO" id="GO:0050821">
    <property type="term" value="P:protein stabilization"/>
    <property type="evidence" value="ECO:0007669"/>
    <property type="project" value="UniProtKB-UniRule"/>
</dbReference>
<dbReference type="CDD" id="cd06470">
    <property type="entry name" value="ACD_IbpA-B_like"/>
    <property type="match status" value="1"/>
</dbReference>
<dbReference type="Gene3D" id="2.60.40.790">
    <property type="match status" value="1"/>
</dbReference>
<dbReference type="HAMAP" id="MF_02001">
    <property type="entry name" value="HSP20_IbpB"/>
    <property type="match status" value="1"/>
</dbReference>
<dbReference type="InterPro" id="IPR002068">
    <property type="entry name" value="A-crystallin/Hsp20_dom"/>
</dbReference>
<dbReference type="InterPro" id="IPR037913">
    <property type="entry name" value="ACD_IbpA/B"/>
</dbReference>
<dbReference type="InterPro" id="IPR008978">
    <property type="entry name" value="HSP20-like_chaperone"/>
</dbReference>
<dbReference type="InterPro" id="IPR022848">
    <property type="entry name" value="HSP20_IbpB"/>
</dbReference>
<dbReference type="NCBIfam" id="NF008618">
    <property type="entry name" value="PRK11597.1"/>
    <property type="match status" value="1"/>
</dbReference>
<dbReference type="PANTHER" id="PTHR47062">
    <property type="match status" value="1"/>
</dbReference>
<dbReference type="PANTHER" id="PTHR47062:SF2">
    <property type="entry name" value="SMALL HEAT SHOCK PROTEIN IBPB"/>
    <property type="match status" value="1"/>
</dbReference>
<dbReference type="Pfam" id="PF00011">
    <property type="entry name" value="HSP20"/>
    <property type="match status" value="1"/>
</dbReference>
<dbReference type="SUPFAM" id="SSF49764">
    <property type="entry name" value="HSP20-like chaperones"/>
    <property type="match status" value="1"/>
</dbReference>
<dbReference type="PROSITE" id="PS01031">
    <property type="entry name" value="SHSP"/>
    <property type="match status" value="1"/>
</dbReference>
<feature type="chain" id="PRO_1000189113" description="Small heat shock protein IbpB">
    <location>
        <begin position="1"/>
        <end position="142"/>
    </location>
</feature>
<feature type="domain" description="sHSP" evidence="2">
    <location>
        <begin position="25"/>
        <end position="136"/>
    </location>
</feature>
<reference key="1">
    <citation type="submission" date="2007-09" db="EMBL/GenBank/DDBJ databases">
        <title>Complete sequence of chromosome of Serratia proteamaculans 568.</title>
        <authorList>
            <consortium name="US DOE Joint Genome Institute"/>
            <person name="Copeland A."/>
            <person name="Lucas S."/>
            <person name="Lapidus A."/>
            <person name="Barry K."/>
            <person name="Glavina del Rio T."/>
            <person name="Dalin E."/>
            <person name="Tice H."/>
            <person name="Pitluck S."/>
            <person name="Chain P."/>
            <person name="Malfatti S."/>
            <person name="Shin M."/>
            <person name="Vergez L."/>
            <person name="Schmutz J."/>
            <person name="Larimer F."/>
            <person name="Land M."/>
            <person name="Hauser L."/>
            <person name="Kyrpides N."/>
            <person name="Kim E."/>
            <person name="Taghavi S."/>
            <person name="Newman L."/>
            <person name="Vangronsveld J."/>
            <person name="van der Lelie D."/>
            <person name="Richardson P."/>
        </authorList>
    </citation>
    <scope>NUCLEOTIDE SEQUENCE [LARGE SCALE GENOMIC DNA]</scope>
    <source>
        <strain>568</strain>
    </source>
</reference>
<accession>A8G7R9</accession>
<organism>
    <name type="scientific">Serratia proteamaculans (strain 568)</name>
    <dbReference type="NCBI Taxonomy" id="399741"/>
    <lineage>
        <taxon>Bacteria</taxon>
        <taxon>Pseudomonadati</taxon>
        <taxon>Pseudomonadota</taxon>
        <taxon>Gammaproteobacteria</taxon>
        <taxon>Enterobacterales</taxon>
        <taxon>Yersiniaceae</taxon>
        <taxon>Serratia</taxon>
    </lineage>
</organism>
<protein>
    <recommendedName>
        <fullName evidence="1">Small heat shock protein IbpB</fullName>
    </recommendedName>
    <alternativeName>
        <fullName evidence="1">16 kDa heat shock protein B</fullName>
    </alternativeName>
</protein>
<comment type="function">
    <text evidence="1">Associates with aggregated proteins, together with IbpA, to stabilize and protect them from irreversible denaturation and extensive proteolysis during heat shock and oxidative stress. Aggregated proteins bound to the IbpAB complex are more efficiently refolded and reactivated by the ATP-dependent chaperone systems ClpB and DnaK/DnaJ/GrpE. Its activity is ATP-independent.</text>
</comment>
<comment type="subunit">
    <text evidence="1">Homodimer. Forms homomultimers of about 100-150 subunits at optimal growth temperatures. Conformation changes to oligomers at high temperatures or high ionic concentrations. The decrease in size of the multimers is accompanied by an increase in chaperone activity.</text>
</comment>
<comment type="subcellular location">
    <subcellularLocation>
        <location evidence="1">Cytoplasm</location>
    </subcellularLocation>
</comment>
<comment type="domain">
    <text evidence="1">The N- and C-terminal flexible termini are involved in oligomerization and in the binding of non-native substrate proteins, and are essential for chaperone activity.</text>
</comment>
<comment type="similarity">
    <text evidence="1 2">Belongs to the small heat shock protein (HSP20) family.</text>
</comment>
<name>IBPB_SERP5</name>
<sequence>MRNYDLSPLLRQWIGFDKLASSMGGQEPQGFPPYNIEKSDDNHYRISLALAGFKQSELDIEVEGPRLTVRGKPTPSEKQVEYLHQGLVCKEFALTFTLAEHLQVSEAQFENGLLHIDLVRQVPEALQPQRIAIGTTPGLEAK</sequence>